<protein>
    <recommendedName>
        <fullName evidence="1">Phosphopentomutase</fullName>
        <ecNumber evidence="1">5.4.2.7</ecNumber>
    </recommendedName>
    <alternativeName>
        <fullName evidence="1">Phosphodeoxyribomutase</fullName>
    </alternativeName>
</protein>
<feature type="chain" id="PRO_1000072809" description="Phosphopentomutase">
    <location>
        <begin position="1"/>
        <end position="395"/>
    </location>
</feature>
<feature type="binding site" evidence="1">
    <location>
        <position position="10"/>
    </location>
    <ligand>
        <name>Mn(2+)</name>
        <dbReference type="ChEBI" id="CHEBI:29035"/>
        <label>1</label>
    </ligand>
</feature>
<feature type="binding site" evidence="1">
    <location>
        <position position="294"/>
    </location>
    <ligand>
        <name>Mn(2+)</name>
        <dbReference type="ChEBI" id="CHEBI:29035"/>
        <label>2</label>
    </ligand>
</feature>
<feature type="binding site" evidence="1">
    <location>
        <position position="299"/>
    </location>
    <ligand>
        <name>Mn(2+)</name>
        <dbReference type="ChEBI" id="CHEBI:29035"/>
        <label>2</label>
    </ligand>
</feature>
<feature type="binding site" evidence="1">
    <location>
        <position position="335"/>
    </location>
    <ligand>
        <name>Mn(2+)</name>
        <dbReference type="ChEBI" id="CHEBI:29035"/>
        <label>1</label>
    </ligand>
</feature>
<feature type="binding site" evidence="1">
    <location>
        <position position="336"/>
    </location>
    <ligand>
        <name>Mn(2+)</name>
        <dbReference type="ChEBI" id="CHEBI:29035"/>
        <label>1</label>
    </ligand>
</feature>
<feature type="binding site" evidence="1">
    <location>
        <position position="347"/>
    </location>
    <ligand>
        <name>Mn(2+)</name>
        <dbReference type="ChEBI" id="CHEBI:29035"/>
        <label>2</label>
    </ligand>
</feature>
<evidence type="ECO:0000255" key="1">
    <source>
        <dbReference type="HAMAP-Rule" id="MF_00740"/>
    </source>
</evidence>
<dbReference type="EC" id="5.4.2.7" evidence="1"/>
<dbReference type="EMBL" id="CP000746">
    <property type="protein sequence ID" value="ABR73999.1"/>
    <property type="molecule type" value="Genomic_DNA"/>
</dbReference>
<dbReference type="RefSeq" id="WP_012072379.1">
    <property type="nucleotide sequence ID" value="NC_009655.1"/>
</dbReference>
<dbReference type="SMR" id="A6VM02"/>
<dbReference type="STRING" id="339671.Asuc_0625"/>
<dbReference type="KEGG" id="asu:Asuc_0625"/>
<dbReference type="eggNOG" id="COG1015">
    <property type="taxonomic scope" value="Bacteria"/>
</dbReference>
<dbReference type="HOGENOM" id="CLU_053861_0_0_6"/>
<dbReference type="OrthoDB" id="9769930at2"/>
<dbReference type="UniPathway" id="UPA00002">
    <property type="reaction ID" value="UER00467"/>
</dbReference>
<dbReference type="Proteomes" id="UP000001114">
    <property type="component" value="Chromosome"/>
</dbReference>
<dbReference type="GO" id="GO:0005829">
    <property type="term" value="C:cytosol"/>
    <property type="evidence" value="ECO:0007669"/>
    <property type="project" value="TreeGrafter"/>
</dbReference>
<dbReference type="GO" id="GO:0000287">
    <property type="term" value="F:magnesium ion binding"/>
    <property type="evidence" value="ECO:0007669"/>
    <property type="project" value="InterPro"/>
</dbReference>
<dbReference type="GO" id="GO:0030145">
    <property type="term" value="F:manganese ion binding"/>
    <property type="evidence" value="ECO:0007669"/>
    <property type="project" value="UniProtKB-UniRule"/>
</dbReference>
<dbReference type="GO" id="GO:0008973">
    <property type="term" value="F:phosphopentomutase activity"/>
    <property type="evidence" value="ECO:0007669"/>
    <property type="project" value="UniProtKB-UniRule"/>
</dbReference>
<dbReference type="GO" id="GO:0006018">
    <property type="term" value="P:2-deoxyribose 1-phosphate catabolic process"/>
    <property type="evidence" value="ECO:0007669"/>
    <property type="project" value="UniProtKB-UniRule"/>
</dbReference>
<dbReference type="GO" id="GO:0006015">
    <property type="term" value="P:5-phosphoribose 1-diphosphate biosynthetic process"/>
    <property type="evidence" value="ECO:0007669"/>
    <property type="project" value="UniProtKB-UniPathway"/>
</dbReference>
<dbReference type="GO" id="GO:0043094">
    <property type="term" value="P:metabolic compound salvage"/>
    <property type="evidence" value="ECO:0007669"/>
    <property type="project" value="InterPro"/>
</dbReference>
<dbReference type="GO" id="GO:0009117">
    <property type="term" value="P:nucleotide metabolic process"/>
    <property type="evidence" value="ECO:0007669"/>
    <property type="project" value="InterPro"/>
</dbReference>
<dbReference type="CDD" id="cd16009">
    <property type="entry name" value="PPM"/>
    <property type="match status" value="1"/>
</dbReference>
<dbReference type="FunFam" id="3.30.70.1250:FF:000001">
    <property type="entry name" value="Phosphopentomutase"/>
    <property type="match status" value="1"/>
</dbReference>
<dbReference type="Gene3D" id="3.40.720.10">
    <property type="entry name" value="Alkaline Phosphatase, subunit A"/>
    <property type="match status" value="1"/>
</dbReference>
<dbReference type="Gene3D" id="3.30.70.1250">
    <property type="entry name" value="Phosphopentomutase"/>
    <property type="match status" value="1"/>
</dbReference>
<dbReference type="HAMAP" id="MF_00740">
    <property type="entry name" value="Phosphopentomut"/>
    <property type="match status" value="1"/>
</dbReference>
<dbReference type="InterPro" id="IPR017850">
    <property type="entry name" value="Alkaline_phosphatase_core_sf"/>
</dbReference>
<dbReference type="InterPro" id="IPR010045">
    <property type="entry name" value="DeoB"/>
</dbReference>
<dbReference type="InterPro" id="IPR006124">
    <property type="entry name" value="Metalloenzyme"/>
</dbReference>
<dbReference type="InterPro" id="IPR024052">
    <property type="entry name" value="Phosphopentomutase_DeoB_cap_sf"/>
</dbReference>
<dbReference type="NCBIfam" id="TIGR01696">
    <property type="entry name" value="deoB"/>
    <property type="match status" value="1"/>
</dbReference>
<dbReference type="NCBIfam" id="NF003766">
    <property type="entry name" value="PRK05362.1"/>
    <property type="match status" value="1"/>
</dbReference>
<dbReference type="PANTHER" id="PTHR21110">
    <property type="entry name" value="PHOSPHOPENTOMUTASE"/>
    <property type="match status" value="1"/>
</dbReference>
<dbReference type="PANTHER" id="PTHR21110:SF0">
    <property type="entry name" value="PHOSPHOPENTOMUTASE"/>
    <property type="match status" value="1"/>
</dbReference>
<dbReference type="Pfam" id="PF01676">
    <property type="entry name" value="Metalloenzyme"/>
    <property type="match status" value="1"/>
</dbReference>
<dbReference type="PIRSF" id="PIRSF001491">
    <property type="entry name" value="Ppentomutase"/>
    <property type="match status" value="1"/>
</dbReference>
<dbReference type="SUPFAM" id="SSF53649">
    <property type="entry name" value="Alkaline phosphatase-like"/>
    <property type="match status" value="1"/>
</dbReference>
<dbReference type="SUPFAM" id="SSF143856">
    <property type="entry name" value="DeoB insert domain-like"/>
    <property type="match status" value="1"/>
</dbReference>
<gene>
    <name evidence="1" type="primary">deoB</name>
    <name type="ordered locus">Asuc_0625</name>
</gene>
<proteinExistence type="inferred from homology"/>
<reference key="1">
    <citation type="journal article" date="2010" name="BMC Genomics">
        <title>A genomic perspective on the potential of Actinobacillus succinogenes for industrial succinate production.</title>
        <authorList>
            <person name="McKinlay J.B."/>
            <person name="Laivenieks M."/>
            <person name="Schindler B.D."/>
            <person name="McKinlay A.A."/>
            <person name="Siddaramappa S."/>
            <person name="Challacombe J.F."/>
            <person name="Lowry S.R."/>
            <person name="Clum A."/>
            <person name="Lapidus A.L."/>
            <person name="Burkhart K.B."/>
            <person name="Harkins V."/>
            <person name="Vieille C."/>
        </authorList>
    </citation>
    <scope>NUCLEOTIDE SEQUENCE [LARGE SCALE GENOMIC DNA]</scope>
    <source>
        <strain>ATCC 55618 / DSM 22257 / CCUG 43843 / 130Z</strain>
    </source>
</reference>
<accession>A6VM02</accession>
<name>DEOB_ACTSZ</name>
<sequence length="395" mass="43434">MKRVLIMMLDSFGIGGAEDADKFGDKGANTLGHIASHQPSLNLPHLESLGLGLAAKESCGELPKHFQNQPHLIGGYAFAREISSGKDTTSGHWEIAGVPVLFDWGLFPDKQNSFPKPLLDRIVAKAGIKGYLGNCHSSGTVILDQLGEEHMKTGLPIFYTSADSVFQIAAHEETFGLNNLYELCEIVRTELEGYNIGRVIARPFIGNKAGAFKRTGNRRDYSVEPPAKTVLQKFIEEKEGMVVSVGKIADIYAHTGISKKVKATGLEELFDKTLEEVKSAGDNTIVFTNFVNFDADFGHRRDVTGYAKGLEYFDRRLPELLRLMKDDDLLIITADHGCDPTWQGSDHTREHIPVLMYGAQVPARFLGARETFADIGQTVAKYLGVSPMEYGTAII</sequence>
<comment type="function">
    <text evidence="1">Isomerase that catalyzes the conversion of deoxy-ribose 1-phosphate (dRib-1-P) and ribose 1-phosphate (Rib-1-P) to deoxy-ribose 5-phosphate (dRib-5-P) and ribose 5-phosphate (Rib-5-P), respectively.</text>
</comment>
<comment type="catalytic activity">
    <reaction evidence="1">
        <text>2-deoxy-alpha-D-ribose 1-phosphate = 2-deoxy-D-ribose 5-phosphate</text>
        <dbReference type="Rhea" id="RHEA:27658"/>
        <dbReference type="ChEBI" id="CHEBI:57259"/>
        <dbReference type="ChEBI" id="CHEBI:62877"/>
        <dbReference type="EC" id="5.4.2.7"/>
    </reaction>
</comment>
<comment type="catalytic activity">
    <reaction evidence="1">
        <text>alpha-D-ribose 1-phosphate = D-ribose 5-phosphate</text>
        <dbReference type="Rhea" id="RHEA:18793"/>
        <dbReference type="ChEBI" id="CHEBI:57720"/>
        <dbReference type="ChEBI" id="CHEBI:78346"/>
        <dbReference type="EC" id="5.4.2.7"/>
    </reaction>
</comment>
<comment type="cofactor">
    <cofactor evidence="1">
        <name>Mn(2+)</name>
        <dbReference type="ChEBI" id="CHEBI:29035"/>
    </cofactor>
    <text evidence="1">Binds 2 manganese ions.</text>
</comment>
<comment type="pathway">
    <text evidence="1">Carbohydrate degradation; 2-deoxy-D-ribose 1-phosphate degradation; D-glyceraldehyde 3-phosphate and acetaldehyde from 2-deoxy-alpha-D-ribose 1-phosphate: step 1/2.</text>
</comment>
<comment type="subcellular location">
    <subcellularLocation>
        <location evidence="1">Cytoplasm</location>
    </subcellularLocation>
</comment>
<comment type="similarity">
    <text evidence="1">Belongs to the phosphopentomutase family.</text>
</comment>
<organism>
    <name type="scientific">Actinobacillus succinogenes (strain ATCC 55618 / DSM 22257 / CCUG 43843 / 130Z)</name>
    <dbReference type="NCBI Taxonomy" id="339671"/>
    <lineage>
        <taxon>Bacteria</taxon>
        <taxon>Pseudomonadati</taxon>
        <taxon>Pseudomonadota</taxon>
        <taxon>Gammaproteobacteria</taxon>
        <taxon>Pasteurellales</taxon>
        <taxon>Pasteurellaceae</taxon>
        <taxon>Actinobacillus</taxon>
    </lineage>
</organism>
<keyword id="KW-0963">Cytoplasm</keyword>
<keyword id="KW-0413">Isomerase</keyword>
<keyword id="KW-0464">Manganese</keyword>
<keyword id="KW-0479">Metal-binding</keyword>
<keyword id="KW-1185">Reference proteome</keyword>